<keyword id="KW-0025">Alternative splicing</keyword>
<keyword id="KW-0150">Chloroplast</keyword>
<keyword id="KW-0903">Direct protein sequencing</keyword>
<keyword id="KW-0249">Electron transport</keyword>
<keyword id="KW-0274">FAD</keyword>
<keyword id="KW-0285">Flavoprotein</keyword>
<keyword id="KW-0521">NADP</keyword>
<keyword id="KW-0560">Oxidoreductase</keyword>
<keyword id="KW-0602">Photosynthesis</keyword>
<keyword id="KW-0934">Plastid</keyword>
<keyword id="KW-1185">Reference proteome</keyword>
<keyword id="KW-0809">Transit peptide</keyword>
<keyword id="KW-0813">Transport</keyword>
<reference key="1">
    <citation type="online journal article" date="1996" name="Plant Gene Register">
        <title>Cloning and nucleotide sequence of a cDNA encoding rice embryo ferredoxin-NADP+ oxidoreductase.</title>
        <authorList>
            <person name="Aoki H."/>
            <person name="Kumada H.O."/>
            <person name="Masumura T."/>
            <person name="Tanaka K."/>
            <person name="Ida S."/>
        </authorList>
        <locator>PGR96-115</locator>
    </citation>
    <scope>NUCLEOTIDE SEQUENCE [MRNA] (ISOFORM 1)</scope>
    <source>
        <strain>cv. Nipponbare</strain>
    </source>
</reference>
<reference key="2">
    <citation type="journal article" date="2005" name="Nature">
        <title>The map-based sequence of the rice genome.</title>
        <authorList>
            <consortium name="International rice genome sequencing project (IRGSP)"/>
        </authorList>
    </citation>
    <scope>NUCLEOTIDE SEQUENCE [LARGE SCALE GENOMIC DNA]</scope>
    <source>
        <strain>cv. Nipponbare</strain>
    </source>
</reference>
<reference key="3">
    <citation type="journal article" date="2008" name="Nucleic Acids Res.">
        <title>The rice annotation project database (RAP-DB): 2008 update.</title>
        <authorList>
            <consortium name="The rice annotation project (RAP)"/>
        </authorList>
    </citation>
    <scope>GENOME REANNOTATION</scope>
    <source>
        <strain>cv. Nipponbare</strain>
    </source>
</reference>
<reference key="4">
    <citation type="journal article" date="2013" name="Rice">
        <title>Improvement of the Oryza sativa Nipponbare reference genome using next generation sequence and optical map data.</title>
        <authorList>
            <person name="Kawahara Y."/>
            <person name="de la Bastide M."/>
            <person name="Hamilton J.P."/>
            <person name="Kanamori H."/>
            <person name="McCombie W.R."/>
            <person name="Ouyang S."/>
            <person name="Schwartz D.C."/>
            <person name="Tanaka T."/>
            <person name="Wu J."/>
            <person name="Zhou S."/>
            <person name="Childs K.L."/>
            <person name="Davidson R.M."/>
            <person name="Lin H."/>
            <person name="Quesada-Ocampo L."/>
            <person name="Vaillancourt B."/>
            <person name="Sakai H."/>
            <person name="Lee S.S."/>
            <person name="Kim J."/>
            <person name="Numa H."/>
            <person name="Itoh T."/>
            <person name="Buell C.R."/>
            <person name="Matsumoto T."/>
        </authorList>
    </citation>
    <scope>GENOME REANNOTATION</scope>
    <source>
        <strain>cv. Nipponbare</strain>
    </source>
</reference>
<reference key="5">
    <citation type="journal article" date="2005" name="PLoS Biol.">
        <title>The genomes of Oryza sativa: a history of duplications.</title>
        <authorList>
            <person name="Yu J."/>
            <person name="Wang J."/>
            <person name="Lin W."/>
            <person name="Li S."/>
            <person name="Li H."/>
            <person name="Zhou J."/>
            <person name="Ni P."/>
            <person name="Dong W."/>
            <person name="Hu S."/>
            <person name="Zeng C."/>
            <person name="Zhang J."/>
            <person name="Zhang Y."/>
            <person name="Li R."/>
            <person name="Xu Z."/>
            <person name="Li S."/>
            <person name="Li X."/>
            <person name="Zheng H."/>
            <person name="Cong L."/>
            <person name="Lin L."/>
            <person name="Yin J."/>
            <person name="Geng J."/>
            <person name="Li G."/>
            <person name="Shi J."/>
            <person name="Liu J."/>
            <person name="Lv H."/>
            <person name="Li J."/>
            <person name="Wang J."/>
            <person name="Deng Y."/>
            <person name="Ran L."/>
            <person name="Shi X."/>
            <person name="Wang X."/>
            <person name="Wu Q."/>
            <person name="Li C."/>
            <person name="Ren X."/>
            <person name="Wang J."/>
            <person name="Wang X."/>
            <person name="Li D."/>
            <person name="Liu D."/>
            <person name="Zhang X."/>
            <person name="Ji Z."/>
            <person name="Zhao W."/>
            <person name="Sun Y."/>
            <person name="Zhang Z."/>
            <person name="Bao J."/>
            <person name="Han Y."/>
            <person name="Dong L."/>
            <person name="Ji J."/>
            <person name="Chen P."/>
            <person name="Wu S."/>
            <person name="Liu J."/>
            <person name="Xiao Y."/>
            <person name="Bu D."/>
            <person name="Tan J."/>
            <person name="Yang L."/>
            <person name="Ye C."/>
            <person name="Zhang J."/>
            <person name="Xu J."/>
            <person name="Zhou Y."/>
            <person name="Yu Y."/>
            <person name="Zhang B."/>
            <person name="Zhuang S."/>
            <person name="Wei H."/>
            <person name="Liu B."/>
            <person name="Lei M."/>
            <person name="Yu H."/>
            <person name="Li Y."/>
            <person name="Xu H."/>
            <person name="Wei S."/>
            <person name="He X."/>
            <person name="Fang L."/>
            <person name="Zhang Z."/>
            <person name="Zhang Y."/>
            <person name="Huang X."/>
            <person name="Su Z."/>
            <person name="Tong W."/>
            <person name="Li J."/>
            <person name="Tong Z."/>
            <person name="Li S."/>
            <person name="Ye J."/>
            <person name="Wang L."/>
            <person name="Fang L."/>
            <person name="Lei T."/>
            <person name="Chen C.-S."/>
            <person name="Chen H.-C."/>
            <person name="Xu Z."/>
            <person name="Li H."/>
            <person name="Huang H."/>
            <person name="Zhang F."/>
            <person name="Xu H."/>
            <person name="Li N."/>
            <person name="Zhao C."/>
            <person name="Li S."/>
            <person name="Dong L."/>
            <person name="Huang Y."/>
            <person name="Li L."/>
            <person name="Xi Y."/>
            <person name="Qi Q."/>
            <person name="Li W."/>
            <person name="Zhang B."/>
            <person name="Hu W."/>
            <person name="Zhang Y."/>
            <person name="Tian X."/>
            <person name="Jiao Y."/>
            <person name="Liang X."/>
            <person name="Jin J."/>
            <person name="Gao L."/>
            <person name="Zheng W."/>
            <person name="Hao B."/>
            <person name="Liu S.-M."/>
            <person name="Wang W."/>
            <person name="Yuan L."/>
            <person name="Cao M."/>
            <person name="McDermott J."/>
            <person name="Samudrala R."/>
            <person name="Wang J."/>
            <person name="Wong G.K.-S."/>
            <person name="Yang H."/>
        </authorList>
    </citation>
    <scope>NUCLEOTIDE SEQUENCE [LARGE SCALE GENOMIC DNA]</scope>
    <source>
        <strain>cv. Nipponbare</strain>
    </source>
</reference>
<reference key="6">
    <citation type="journal article" date="2003" name="Science">
        <title>Collection, mapping, and annotation of over 28,000 cDNA clones from japonica rice.</title>
        <authorList>
            <consortium name="The rice full-length cDNA consortium"/>
        </authorList>
    </citation>
    <scope>NUCLEOTIDE SEQUENCE [LARGE SCALE MRNA] (ISOFORM 2)</scope>
    <source>
        <strain>cv. Nipponbare</strain>
    </source>
</reference>
<reference key="7">
    <citation type="journal article" date="2004" name="Nucleic Acids Res.">
        <title>Rice proteome database based on two-dimensional polyacrylamide gel electrophoresis: its status in 2003.</title>
        <authorList>
            <person name="Komatsu S."/>
            <person name="Kojima K."/>
            <person name="Suzuki K."/>
            <person name="Ozaki K."/>
            <person name="Higo K."/>
        </authorList>
    </citation>
    <scope>PROTEIN SEQUENCE OF 281-289</scope>
    <source>
        <strain>cv. Nipponbare</strain>
        <tissue>Stem</tissue>
    </source>
</reference>
<protein>
    <recommendedName>
        <fullName>Ferredoxin--NADP reductase, embryo isozyme, chloroplastic</fullName>
        <shortName>FNR</shortName>
        <ecNumber>1.18.1.2</ecNumber>
    </recommendedName>
</protein>
<proteinExistence type="evidence at protein level"/>
<accession>O23877</accession>
<accession>A0A0P0X2G7</accession>
<accession>Q0D8L9</accession>
<accession>Q6ZF67</accession>
<evidence type="ECO:0000250" key="1"/>
<evidence type="ECO:0000255" key="2">
    <source>
        <dbReference type="PROSITE-ProRule" id="PRU00716"/>
    </source>
</evidence>
<evidence type="ECO:0000303" key="3">
    <source>
    </source>
</evidence>
<evidence type="ECO:0000305" key="4"/>
<evidence type="ECO:0000312" key="5">
    <source>
        <dbReference type="EMBL" id="BAF20804.1"/>
    </source>
</evidence>
<evidence type="ECO:0000312" key="6">
    <source>
        <dbReference type="EMBL" id="EAZ38695.1"/>
    </source>
</evidence>
<dbReference type="EC" id="1.18.1.2"/>
<dbReference type="EMBL" id="D87547">
    <property type="protein sequence ID" value="BAA13417.1"/>
    <property type="molecule type" value="mRNA"/>
</dbReference>
<dbReference type="EMBL" id="AP004263">
    <property type="protein sequence ID" value="BAC83340.1"/>
    <property type="molecule type" value="Genomic_DNA"/>
</dbReference>
<dbReference type="EMBL" id="AP008213">
    <property type="protein sequence ID" value="BAF20804.1"/>
    <property type="molecule type" value="Genomic_DNA"/>
</dbReference>
<dbReference type="EMBL" id="AP014963">
    <property type="protein sequence ID" value="BAT00063.1"/>
    <property type="molecule type" value="Genomic_DNA"/>
</dbReference>
<dbReference type="EMBL" id="CM000144">
    <property type="protein sequence ID" value="EAZ38695.1"/>
    <property type="molecule type" value="Genomic_DNA"/>
</dbReference>
<dbReference type="EMBL" id="AK072768">
    <property type="status" value="NOT_ANNOTATED_CDS"/>
    <property type="molecule type" value="mRNA"/>
</dbReference>
<dbReference type="PIR" id="T02977">
    <property type="entry name" value="T02977"/>
</dbReference>
<dbReference type="RefSeq" id="XP_015646844.1">
    <property type="nucleotide sequence ID" value="XM_015791358.1"/>
</dbReference>
<dbReference type="SMR" id="O23877"/>
<dbReference type="FunCoup" id="O23877">
    <property type="interactions" value="335"/>
</dbReference>
<dbReference type="STRING" id="39947.O23877"/>
<dbReference type="PaxDb" id="39947-O23877"/>
<dbReference type="EnsemblPlants" id="Os07t0147900-01">
    <molecule id="O23877-1"/>
    <property type="protein sequence ID" value="Os07t0147900-01"/>
    <property type="gene ID" value="Os07g0147900"/>
</dbReference>
<dbReference type="Gramene" id="Os07t0147900-01">
    <molecule id="O23877-1"/>
    <property type="protein sequence ID" value="Os07t0147900-01"/>
    <property type="gene ID" value="Os07g0147900"/>
</dbReference>
<dbReference type="KEGG" id="dosa:Os07g0147900"/>
<dbReference type="eggNOG" id="KOG1158">
    <property type="taxonomic scope" value="Eukaryota"/>
</dbReference>
<dbReference type="HOGENOM" id="CLU_053066_1_0_1"/>
<dbReference type="InParanoid" id="O23877"/>
<dbReference type="OMA" id="SIMMICT"/>
<dbReference type="OrthoDB" id="1688044at2759"/>
<dbReference type="UniPathway" id="UPA00091"/>
<dbReference type="Proteomes" id="UP000000763">
    <property type="component" value="Chromosome 7"/>
</dbReference>
<dbReference type="Proteomes" id="UP000007752">
    <property type="component" value="Chromosome 7"/>
</dbReference>
<dbReference type="Proteomes" id="UP000059680">
    <property type="component" value="Chromosome 7"/>
</dbReference>
<dbReference type="ExpressionAtlas" id="O23877">
    <property type="expression patterns" value="baseline and differential"/>
</dbReference>
<dbReference type="GO" id="GO:0009507">
    <property type="term" value="C:chloroplast"/>
    <property type="evidence" value="ECO:0007669"/>
    <property type="project" value="UniProtKB-SubCell"/>
</dbReference>
<dbReference type="GO" id="GO:0031090">
    <property type="term" value="C:organelle membrane"/>
    <property type="evidence" value="ECO:0007669"/>
    <property type="project" value="UniProtKB-ARBA"/>
</dbReference>
<dbReference type="GO" id="GO:0004324">
    <property type="term" value="F:ferredoxin-NADP+ reductase activity"/>
    <property type="evidence" value="ECO:0007669"/>
    <property type="project" value="UniProtKB-EC"/>
</dbReference>
<dbReference type="GO" id="GO:0015979">
    <property type="term" value="P:photosynthesis"/>
    <property type="evidence" value="ECO:0007669"/>
    <property type="project" value="UniProtKB-UniPathway"/>
</dbReference>
<dbReference type="CDD" id="cd06208">
    <property type="entry name" value="CYPOR_like_FNR"/>
    <property type="match status" value="1"/>
</dbReference>
<dbReference type="FunFam" id="2.40.30.10:FF:000048">
    <property type="entry name" value="Ferredoxin--NADP reductase, chloroplastic"/>
    <property type="match status" value="1"/>
</dbReference>
<dbReference type="FunFam" id="3.40.50.80:FF:000008">
    <property type="entry name" value="Ferredoxin--NADP reductase, chloroplastic"/>
    <property type="match status" value="1"/>
</dbReference>
<dbReference type="Gene3D" id="3.40.50.80">
    <property type="entry name" value="Nucleotide-binding domain of ferredoxin-NADP reductase (FNR) module"/>
    <property type="match status" value="1"/>
</dbReference>
<dbReference type="Gene3D" id="2.40.30.10">
    <property type="entry name" value="Translation factors"/>
    <property type="match status" value="1"/>
</dbReference>
<dbReference type="InterPro" id="IPR017927">
    <property type="entry name" value="FAD-bd_FR_type"/>
</dbReference>
<dbReference type="InterPro" id="IPR001709">
    <property type="entry name" value="Flavoprot_Pyr_Nucl_cyt_Rdtase"/>
</dbReference>
<dbReference type="InterPro" id="IPR015701">
    <property type="entry name" value="FNR"/>
</dbReference>
<dbReference type="InterPro" id="IPR039261">
    <property type="entry name" value="FNR_nucleotide-bd"/>
</dbReference>
<dbReference type="InterPro" id="IPR035442">
    <property type="entry name" value="FNR_plant_Cyanobacteria"/>
</dbReference>
<dbReference type="InterPro" id="IPR001433">
    <property type="entry name" value="OxRdtase_FAD/NAD-bd"/>
</dbReference>
<dbReference type="InterPro" id="IPR017938">
    <property type="entry name" value="Riboflavin_synthase-like_b-brl"/>
</dbReference>
<dbReference type="PANTHER" id="PTHR43314">
    <property type="match status" value="1"/>
</dbReference>
<dbReference type="Pfam" id="PF00175">
    <property type="entry name" value="NAD_binding_1"/>
    <property type="match status" value="1"/>
</dbReference>
<dbReference type="PIRSF" id="PIRSF501178">
    <property type="entry name" value="FNR-PetH"/>
    <property type="match status" value="1"/>
</dbReference>
<dbReference type="PIRSF" id="PIRSF000361">
    <property type="entry name" value="Frd-NADP+_RD"/>
    <property type="match status" value="1"/>
</dbReference>
<dbReference type="PRINTS" id="PR00371">
    <property type="entry name" value="FPNCR"/>
</dbReference>
<dbReference type="SUPFAM" id="SSF52343">
    <property type="entry name" value="Ferredoxin reductase-like, C-terminal NADP-linked domain"/>
    <property type="match status" value="1"/>
</dbReference>
<dbReference type="SUPFAM" id="SSF63380">
    <property type="entry name" value="Riboflavin synthase domain-like"/>
    <property type="match status" value="1"/>
</dbReference>
<dbReference type="PROSITE" id="PS51384">
    <property type="entry name" value="FAD_FR"/>
    <property type="match status" value="1"/>
</dbReference>
<gene>
    <name evidence="5" type="ordered locus">Os07g0147900</name>
    <name evidence="4" type="ordered locus">LOC_Os07g05400</name>
    <name evidence="6" type="ORF">OsJ_23093</name>
    <name type="ORF">P0022E03.21-1</name>
</gene>
<feature type="transit peptide" description="Chloroplast">
    <location>
        <begin position="1"/>
        <end position="62"/>
    </location>
</feature>
<feature type="chain" id="PRO_0000019417" description="Ferredoxin--NADP reductase, embryo isozyme, chloroplastic">
    <location>
        <begin position="63"/>
        <end position="378"/>
    </location>
</feature>
<feature type="domain" description="FAD-binding FR-type" evidence="2">
    <location>
        <begin position="93"/>
        <end position="221"/>
    </location>
</feature>
<feature type="binding site" evidence="1">
    <location>
        <begin position="153"/>
        <end position="156"/>
    </location>
    <ligand>
        <name>FAD</name>
        <dbReference type="ChEBI" id="CHEBI:57692"/>
    </ligand>
</feature>
<feature type="binding site" evidence="1">
    <location>
        <position position="156"/>
    </location>
    <ligand>
        <name>NADP(+)</name>
        <dbReference type="ChEBI" id="CHEBI:58349"/>
    </ligand>
</feature>
<feature type="binding site" evidence="1">
    <location>
        <begin position="174"/>
        <end position="176"/>
    </location>
    <ligand>
        <name>FAD</name>
        <dbReference type="ChEBI" id="CHEBI:57692"/>
    </ligand>
</feature>
<feature type="binding site" evidence="1">
    <location>
        <position position="176"/>
    </location>
    <ligand>
        <name>NADP(+)</name>
        <dbReference type="ChEBI" id="CHEBI:58349"/>
    </ligand>
</feature>
<feature type="binding site" evidence="1">
    <location>
        <position position="180"/>
    </location>
    <ligand>
        <name>FAD</name>
        <dbReference type="ChEBI" id="CHEBI:57692"/>
    </ligand>
</feature>
<feature type="binding site" evidence="1">
    <location>
        <begin position="195"/>
        <end position="197"/>
    </location>
    <ligand>
        <name>FAD</name>
        <dbReference type="ChEBI" id="CHEBI:57692"/>
    </ligand>
</feature>
<feature type="binding site" evidence="1">
    <location>
        <position position="237"/>
    </location>
    <ligand>
        <name>FAD</name>
        <dbReference type="ChEBI" id="CHEBI:57692"/>
    </ligand>
</feature>
<feature type="binding site" evidence="1">
    <location>
        <position position="237"/>
    </location>
    <ligand>
        <name>NADP(+)</name>
        <dbReference type="ChEBI" id="CHEBI:58349"/>
    </ligand>
</feature>
<feature type="binding site" evidence="1">
    <location>
        <begin position="269"/>
        <end position="270"/>
    </location>
    <ligand>
        <name>NADP(+)</name>
        <dbReference type="ChEBI" id="CHEBI:58349"/>
    </ligand>
</feature>
<feature type="binding site" evidence="1">
    <location>
        <begin position="299"/>
        <end position="300"/>
    </location>
    <ligand>
        <name>NADP(+)</name>
        <dbReference type="ChEBI" id="CHEBI:58349"/>
    </ligand>
</feature>
<feature type="binding site" evidence="1">
    <location>
        <position position="309"/>
    </location>
    <ligand>
        <name>NADP(+)</name>
        <dbReference type="ChEBI" id="CHEBI:58349"/>
    </ligand>
</feature>
<feature type="binding site" evidence="1">
    <location>
        <begin position="337"/>
        <end position="338"/>
    </location>
    <ligand>
        <name>NADP(+)</name>
        <dbReference type="ChEBI" id="CHEBI:58349"/>
    </ligand>
</feature>
<feature type="binding site" evidence="1">
    <location>
        <position position="376"/>
    </location>
    <ligand>
        <name>NADP(+)</name>
        <dbReference type="ChEBI" id="CHEBI:58349"/>
    </ligand>
</feature>
<feature type="splice variant" id="VSP_017442" description="In isoform 2." evidence="3">
    <location>
        <begin position="1"/>
        <end position="218"/>
    </location>
</feature>
<sequence length="378" mass="41815">MASALGAQASVAAPIGAGGYGRSSSSKGSNTVNFCNKSWIGTTLAWESKALKSRHMNKIFSMSVQQASKSKVAVKPLELDNAKEPPLNLYKPKEPYTATIVSVERLVGPKAPGETCHIVIDHGGNVPYWEGQSYGVIPPGENPKKPGSPNTVRLYSIASTRYGDSFDGKTASLCVRRAVYYDPETGKEDPTKKGICSNFLCDSKPGDKVQITGPSGKIMLLPEDDPNATHIMIATGTGVAPYRGYLRRMFMEDVPSFKFGGLAWLFLGVANTDSLLYDEEFTNYLQQYPDNFRYDKALSREQKNKNGGKMYVQDKIEEYSDEIFKLLDGGAHIYFCGLKGMMPGIQDTLKRVAEQRGESWEQKLSQLKKNKQWHVEVY</sequence>
<comment type="function">
    <text>May play a key role in regulating the relative amounts of cyclic and non-cyclic electron flow to meet the demands of the plant for ATP and reducing power. Is involved in nitrate assimilation.</text>
</comment>
<comment type="catalytic activity">
    <reaction>
        <text>2 reduced [2Fe-2S]-[ferredoxin] + NADP(+) + H(+) = 2 oxidized [2Fe-2S]-[ferredoxin] + NADPH</text>
        <dbReference type="Rhea" id="RHEA:20125"/>
        <dbReference type="Rhea" id="RHEA-COMP:10000"/>
        <dbReference type="Rhea" id="RHEA-COMP:10001"/>
        <dbReference type="ChEBI" id="CHEBI:15378"/>
        <dbReference type="ChEBI" id="CHEBI:33737"/>
        <dbReference type="ChEBI" id="CHEBI:33738"/>
        <dbReference type="ChEBI" id="CHEBI:57783"/>
        <dbReference type="ChEBI" id="CHEBI:58349"/>
        <dbReference type="EC" id="1.18.1.2"/>
    </reaction>
</comment>
<comment type="cofactor">
    <cofactor>
        <name>FAD</name>
        <dbReference type="ChEBI" id="CHEBI:57692"/>
    </cofactor>
</comment>
<comment type="pathway">
    <text>Energy metabolism; photosynthesis.</text>
</comment>
<comment type="subcellular location">
    <subcellularLocation>
        <location evidence="1">Plastid</location>
        <location evidence="1">Chloroplast</location>
    </subcellularLocation>
</comment>
<comment type="alternative products">
    <event type="alternative splicing"/>
    <isoform>
        <id>O23877-1</id>
        <name>1</name>
        <sequence type="displayed"/>
    </isoform>
    <isoform>
        <id>O23877-2</id>
        <name>2</name>
        <sequence type="described" ref="VSP_017442"/>
    </isoform>
</comment>
<comment type="similarity">
    <text evidence="4">Belongs to the ferredoxin--NADP reductase type 1 family.</text>
</comment>
<organism>
    <name type="scientific">Oryza sativa subsp. japonica</name>
    <name type="common">Rice</name>
    <dbReference type="NCBI Taxonomy" id="39947"/>
    <lineage>
        <taxon>Eukaryota</taxon>
        <taxon>Viridiplantae</taxon>
        <taxon>Streptophyta</taxon>
        <taxon>Embryophyta</taxon>
        <taxon>Tracheophyta</taxon>
        <taxon>Spermatophyta</taxon>
        <taxon>Magnoliopsida</taxon>
        <taxon>Liliopsida</taxon>
        <taxon>Poales</taxon>
        <taxon>Poaceae</taxon>
        <taxon>BOP clade</taxon>
        <taxon>Oryzoideae</taxon>
        <taxon>Oryzeae</taxon>
        <taxon>Oryzinae</taxon>
        <taxon>Oryza</taxon>
        <taxon>Oryza sativa</taxon>
    </lineage>
</organism>
<name>FENR3_ORYSJ</name>